<sequence length="205" mass="23684">MSPKVTKEHKDKRQAEILEAAKTVFKRKGFELTTMKDVVEESGFSRGGVYLYFSSTEEMFRRIIETGLDEGLRKLDKSAEHQSVWASISSYLDELTEGLRDVADTLAPVQFEYLVTAWRNEERRQYLEKRYDLFVERFSRLLQKGIDQGEFQPVQPLATIAKFFLNMNDGIIQNALYFDEEKADVSGLAESAKLYLKTVLQADEK</sequence>
<reference key="1">
    <citation type="journal article" date="1996" name="DNA Res.">
        <title>Cloning and sequencing of a 27.8-kb nucleotide sequence of the 79 degrees-81 degrees region of the Bacillus subtilis genome containing the sspE locus.</title>
        <authorList>
            <person name="Yamamoto H."/>
            <person name="Uchiyama S."/>
            <person name="Sekiguchi J."/>
        </authorList>
    </citation>
    <scope>NUCLEOTIDE SEQUENCE [GENOMIC DNA]</scope>
</reference>
<reference key="2">
    <citation type="journal article" date="1997" name="Nature">
        <title>The complete genome sequence of the Gram-positive bacterium Bacillus subtilis.</title>
        <authorList>
            <person name="Kunst F."/>
            <person name="Ogasawara N."/>
            <person name="Moszer I."/>
            <person name="Albertini A.M."/>
            <person name="Alloni G."/>
            <person name="Azevedo V."/>
            <person name="Bertero M.G."/>
            <person name="Bessieres P."/>
            <person name="Bolotin A."/>
            <person name="Borchert S."/>
            <person name="Borriss R."/>
            <person name="Boursier L."/>
            <person name="Brans A."/>
            <person name="Braun M."/>
            <person name="Brignell S.C."/>
            <person name="Bron S."/>
            <person name="Brouillet S."/>
            <person name="Bruschi C.V."/>
            <person name="Caldwell B."/>
            <person name="Capuano V."/>
            <person name="Carter N.M."/>
            <person name="Choi S.-K."/>
            <person name="Codani J.-J."/>
            <person name="Connerton I.F."/>
            <person name="Cummings N.J."/>
            <person name="Daniel R.A."/>
            <person name="Denizot F."/>
            <person name="Devine K.M."/>
            <person name="Duesterhoeft A."/>
            <person name="Ehrlich S.D."/>
            <person name="Emmerson P.T."/>
            <person name="Entian K.-D."/>
            <person name="Errington J."/>
            <person name="Fabret C."/>
            <person name="Ferrari E."/>
            <person name="Foulger D."/>
            <person name="Fritz C."/>
            <person name="Fujita M."/>
            <person name="Fujita Y."/>
            <person name="Fuma S."/>
            <person name="Galizzi A."/>
            <person name="Galleron N."/>
            <person name="Ghim S.-Y."/>
            <person name="Glaser P."/>
            <person name="Goffeau A."/>
            <person name="Golightly E.J."/>
            <person name="Grandi G."/>
            <person name="Guiseppi G."/>
            <person name="Guy B.J."/>
            <person name="Haga K."/>
            <person name="Haiech J."/>
            <person name="Harwood C.R."/>
            <person name="Henaut A."/>
            <person name="Hilbert H."/>
            <person name="Holsappel S."/>
            <person name="Hosono S."/>
            <person name="Hullo M.-F."/>
            <person name="Itaya M."/>
            <person name="Jones L.-M."/>
            <person name="Joris B."/>
            <person name="Karamata D."/>
            <person name="Kasahara Y."/>
            <person name="Klaerr-Blanchard M."/>
            <person name="Klein C."/>
            <person name="Kobayashi Y."/>
            <person name="Koetter P."/>
            <person name="Koningstein G."/>
            <person name="Krogh S."/>
            <person name="Kumano M."/>
            <person name="Kurita K."/>
            <person name="Lapidus A."/>
            <person name="Lardinois S."/>
            <person name="Lauber J."/>
            <person name="Lazarevic V."/>
            <person name="Lee S.-M."/>
            <person name="Levine A."/>
            <person name="Liu H."/>
            <person name="Masuda S."/>
            <person name="Mauel C."/>
            <person name="Medigue C."/>
            <person name="Medina N."/>
            <person name="Mellado R.P."/>
            <person name="Mizuno M."/>
            <person name="Moestl D."/>
            <person name="Nakai S."/>
            <person name="Noback M."/>
            <person name="Noone D."/>
            <person name="O'Reilly M."/>
            <person name="Ogawa K."/>
            <person name="Ogiwara A."/>
            <person name="Oudega B."/>
            <person name="Park S.-H."/>
            <person name="Parro V."/>
            <person name="Pohl T.M."/>
            <person name="Portetelle D."/>
            <person name="Porwollik S."/>
            <person name="Prescott A.M."/>
            <person name="Presecan E."/>
            <person name="Pujic P."/>
            <person name="Purnelle B."/>
            <person name="Rapoport G."/>
            <person name="Rey M."/>
            <person name="Reynolds S."/>
            <person name="Rieger M."/>
            <person name="Rivolta C."/>
            <person name="Rocha E."/>
            <person name="Roche B."/>
            <person name="Rose M."/>
            <person name="Sadaie Y."/>
            <person name="Sato T."/>
            <person name="Scanlan E."/>
            <person name="Schleich S."/>
            <person name="Schroeter R."/>
            <person name="Scoffone F."/>
            <person name="Sekiguchi J."/>
            <person name="Sekowska A."/>
            <person name="Seror S.J."/>
            <person name="Serror P."/>
            <person name="Shin B.-S."/>
            <person name="Soldo B."/>
            <person name="Sorokin A."/>
            <person name="Tacconi E."/>
            <person name="Takagi T."/>
            <person name="Takahashi H."/>
            <person name="Takemaru K."/>
            <person name="Takeuchi M."/>
            <person name="Tamakoshi A."/>
            <person name="Tanaka T."/>
            <person name="Terpstra P."/>
            <person name="Tognoni A."/>
            <person name="Tosato V."/>
            <person name="Uchiyama S."/>
            <person name="Vandenbol M."/>
            <person name="Vannier F."/>
            <person name="Vassarotti A."/>
            <person name="Viari A."/>
            <person name="Wambutt R."/>
            <person name="Wedler E."/>
            <person name="Wedler H."/>
            <person name="Weitzenegger T."/>
            <person name="Winters P."/>
            <person name="Wipat A."/>
            <person name="Yamamoto H."/>
            <person name="Yamane K."/>
            <person name="Yasumoto K."/>
            <person name="Yata K."/>
            <person name="Yoshida K."/>
            <person name="Yoshikawa H.-F."/>
            <person name="Zumstein E."/>
            <person name="Yoshikawa H."/>
            <person name="Danchin A."/>
        </authorList>
    </citation>
    <scope>NUCLEOTIDE SEQUENCE [LARGE SCALE GENOMIC DNA]</scope>
    <source>
        <strain>168</strain>
    </source>
</reference>
<reference key="3">
    <citation type="journal article" date="2005" name="Microbiol. Mol. Biol. Rev.">
        <title>The TetR family of transcriptional repressors.</title>
        <authorList>
            <person name="Ramos J.L."/>
            <person name="Martinez-Bueno M."/>
            <person name="Molina-Henares A.J."/>
            <person name="Teran W."/>
            <person name="Watanabe K."/>
            <person name="Zhang X."/>
            <person name="Gallegos M.T."/>
            <person name="Brennan R."/>
            <person name="Tobes R."/>
        </authorList>
    </citation>
    <scope>REVIEW</scope>
    <scope>GENE FAMILY</scope>
</reference>
<reference key="4">
    <citation type="journal article" date="2006" name="Proteins">
        <title>Crystal structure of YfiR, an unusual TetR/CamR-type putative transcriptional regulator from Bacillus subtilis.</title>
        <authorList>
            <person name="Rajan S.S."/>
            <person name="Yang X."/>
            <person name="Shuvalova L."/>
            <person name="Collart F."/>
            <person name="Anderson W.F."/>
        </authorList>
    </citation>
    <scope>X-RAY CRYSTALLOGRAPHY (1.95 ANGSTROMS)</scope>
</reference>
<feature type="chain" id="PRO_0000360710" description="Uncharacterized HTH-type transcriptional regulator YfiR">
    <location>
        <begin position="1"/>
        <end position="205"/>
    </location>
</feature>
<feature type="domain" description="HTH tetR-type" evidence="1">
    <location>
        <begin position="11"/>
        <end position="71"/>
    </location>
</feature>
<feature type="DNA-binding region" description="H-T-H motif" evidence="1">
    <location>
        <begin position="34"/>
        <end position="53"/>
    </location>
</feature>
<feature type="helix" evidence="2">
    <location>
        <begin position="6"/>
        <end position="28"/>
    </location>
</feature>
<feature type="helix" evidence="2">
    <location>
        <begin position="35"/>
        <end position="42"/>
    </location>
</feature>
<feature type="helix" evidence="2">
    <location>
        <begin position="46"/>
        <end position="50"/>
    </location>
</feature>
<feature type="helix" evidence="2">
    <location>
        <begin position="56"/>
        <end position="78"/>
    </location>
</feature>
<feature type="turn" evidence="2">
    <location>
        <begin position="79"/>
        <end position="81"/>
    </location>
</feature>
<feature type="helix" evidence="2">
    <location>
        <begin position="84"/>
        <end position="98"/>
    </location>
</feature>
<feature type="turn" evidence="2">
    <location>
        <begin position="99"/>
        <end position="101"/>
    </location>
</feature>
<feature type="helix" evidence="2">
    <location>
        <begin position="102"/>
        <end position="104"/>
    </location>
</feature>
<feature type="helix" evidence="2">
    <location>
        <begin position="107"/>
        <end position="115"/>
    </location>
</feature>
<feature type="helix" evidence="2">
    <location>
        <begin position="116"/>
        <end position="119"/>
    </location>
</feature>
<feature type="helix" evidence="2">
    <location>
        <begin position="121"/>
        <end position="147"/>
    </location>
</feature>
<feature type="helix" evidence="2">
    <location>
        <begin position="157"/>
        <end position="177"/>
    </location>
</feature>
<feature type="helix" evidence="2">
    <location>
        <begin position="180"/>
        <end position="183"/>
    </location>
</feature>
<feature type="helix" evidence="2">
    <location>
        <begin position="185"/>
        <end position="200"/>
    </location>
</feature>
<dbReference type="EMBL" id="D85082">
    <property type="protein sequence ID" value="BAA24458.1"/>
    <property type="molecule type" value="Genomic_DNA"/>
</dbReference>
<dbReference type="EMBL" id="AL009126">
    <property type="protein sequence ID" value="CAB12666.1"/>
    <property type="molecule type" value="Genomic_DNA"/>
</dbReference>
<dbReference type="PIR" id="D69804">
    <property type="entry name" value="D69804"/>
</dbReference>
<dbReference type="RefSeq" id="NP_388718.1">
    <property type="nucleotide sequence ID" value="NC_000964.3"/>
</dbReference>
<dbReference type="RefSeq" id="WP_003243967.1">
    <property type="nucleotide sequence ID" value="NZ_OZ025638.1"/>
</dbReference>
<dbReference type="PDB" id="1RKT">
    <property type="method" value="X-ray"/>
    <property type="resolution" value="1.95 A"/>
    <property type="chains" value="A/B=1-205"/>
</dbReference>
<dbReference type="PDBsum" id="1RKT"/>
<dbReference type="SMR" id="O31560"/>
<dbReference type="FunCoup" id="O31560">
    <property type="interactions" value="56"/>
</dbReference>
<dbReference type="STRING" id="224308.BSU08370"/>
<dbReference type="PaxDb" id="224308-BSU08370"/>
<dbReference type="EnsemblBacteria" id="CAB12666">
    <property type="protein sequence ID" value="CAB12666"/>
    <property type="gene ID" value="BSU_08370"/>
</dbReference>
<dbReference type="GeneID" id="936176"/>
<dbReference type="KEGG" id="bsu:BSU08370"/>
<dbReference type="PATRIC" id="fig|224308.179.peg.905"/>
<dbReference type="eggNOG" id="COG1309">
    <property type="taxonomic scope" value="Bacteria"/>
</dbReference>
<dbReference type="InParanoid" id="O31560"/>
<dbReference type="OrthoDB" id="9814703at2"/>
<dbReference type="PhylomeDB" id="O31560"/>
<dbReference type="BioCyc" id="BSUB:BSU08370-MONOMER"/>
<dbReference type="EvolutionaryTrace" id="O31560"/>
<dbReference type="Proteomes" id="UP000001570">
    <property type="component" value="Chromosome"/>
</dbReference>
<dbReference type="GO" id="GO:0003700">
    <property type="term" value="F:DNA-binding transcription factor activity"/>
    <property type="evidence" value="ECO:0000318"/>
    <property type="project" value="GO_Central"/>
</dbReference>
<dbReference type="GO" id="GO:0000976">
    <property type="term" value="F:transcription cis-regulatory region binding"/>
    <property type="evidence" value="ECO:0000318"/>
    <property type="project" value="GO_Central"/>
</dbReference>
<dbReference type="GO" id="GO:0006355">
    <property type="term" value="P:regulation of DNA-templated transcription"/>
    <property type="evidence" value="ECO:0000318"/>
    <property type="project" value="GO_Central"/>
</dbReference>
<dbReference type="Gene3D" id="1.10.10.60">
    <property type="entry name" value="Homeodomain-like"/>
    <property type="match status" value="1"/>
</dbReference>
<dbReference type="Gene3D" id="1.10.357.10">
    <property type="entry name" value="Tetracycline Repressor, domain 2"/>
    <property type="match status" value="1"/>
</dbReference>
<dbReference type="InterPro" id="IPR009057">
    <property type="entry name" value="Homeodomain-like_sf"/>
</dbReference>
<dbReference type="InterPro" id="IPR001647">
    <property type="entry name" value="HTH_TetR"/>
</dbReference>
<dbReference type="InterPro" id="IPR036271">
    <property type="entry name" value="Tet_transcr_reg_TetR-rel_C_sf"/>
</dbReference>
<dbReference type="InterPro" id="IPR041612">
    <property type="entry name" value="YfiR_C"/>
</dbReference>
<dbReference type="PANTHER" id="PTHR47506:SF6">
    <property type="entry name" value="HTH-TYPE TRANSCRIPTIONAL REPRESSOR NEMR"/>
    <property type="match status" value="1"/>
</dbReference>
<dbReference type="PANTHER" id="PTHR47506">
    <property type="entry name" value="TRANSCRIPTIONAL REGULATORY PROTEIN"/>
    <property type="match status" value="1"/>
</dbReference>
<dbReference type="Pfam" id="PF17922">
    <property type="entry name" value="TetR_C_17"/>
    <property type="match status" value="1"/>
</dbReference>
<dbReference type="Pfam" id="PF00440">
    <property type="entry name" value="TetR_N"/>
    <property type="match status" value="1"/>
</dbReference>
<dbReference type="PRINTS" id="PR00455">
    <property type="entry name" value="HTHTETR"/>
</dbReference>
<dbReference type="SUPFAM" id="SSF46689">
    <property type="entry name" value="Homeodomain-like"/>
    <property type="match status" value="1"/>
</dbReference>
<dbReference type="SUPFAM" id="SSF48498">
    <property type="entry name" value="Tetracyclin repressor-like, C-terminal domain"/>
    <property type="match status" value="1"/>
</dbReference>
<dbReference type="PROSITE" id="PS50977">
    <property type="entry name" value="HTH_TETR_2"/>
    <property type="match status" value="1"/>
</dbReference>
<organism>
    <name type="scientific">Bacillus subtilis (strain 168)</name>
    <dbReference type="NCBI Taxonomy" id="224308"/>
    <lineage>
        <taxon>Bacteria</taxon>
        <taxon>Bacillati</taxon>
        <taxon>Bacillota</taxon>
        <taxon>Bacilli</taxon>
        <taxon>Bacillales</taxon>
        <taxon>Bacillaceae</taxon>
        <taxon>Bacillus</taxon>
    </lineage>
</organism>
<protein>
    <recommendedName>
        <fullName>Uncharacterized HTH-type transcriptional regulator YfiR</fullName>
    </recommendedName>
</protein>
<accession>O31560</accession>
<accession>Q79EW9</accession>
<gene>
    <name type="primary">yfiR</name>
    <name type="ordered locus">BSU08370</name>
</gene>
<evidence type="ECO:0000255" key="1">
    <source>
        <dbReference type="PROSITE-ProRule" id="PRU00335"/>
    </source>
</evidence>
<evidence type="ECO:0007829" key="2">
    <source>
        <dbReference type="PDB" id="1RKT"/>
    </source>
</evidence>
<keyword id="KW-0002">3D-structure</keyword>
<keyword id="KW-0238">DNA-binding</keyword>
<keyword id="KW-1185">Reference proteome</keyword>
<keyword id="KW-0678">Repressor</keyword>
<keyword id="KW-0804">Transcription</keyword>
<keyword id="KW-0805">Transcription regulation</keyword>
<proteinExistence type="evidence at protein level"/>
<name>YFIR_BACSU</name>